<sequence length="335" mass="38424">MSSEVLPASIEPPNVEGKPGASDSEEERQKQRVDAEAQPISKRQLKKLMKQRLWEEQREQRKEKRKEKRKRKKLERRCQLESNSDGNDRKRIRRHVAPSNLRLIIDCSFDDLMVLKDIKKLHKQIQRCYAENRRASHPVQFYLTSHGGQLKKNMDENDQGWVNWKDIHIKSEHYSELIKKEDLVYLTSDSPNVLKDLDESKAYVIGGLVDHNHHKGLTFKQASSYGIKHAQLPLAEFVKMNSRKVLAVNHVFEIILEFLETGDWQEAFFTILPPRKGAVPAHKACESSPQDHQALPGGWDSAIEGEHGRDDPGSPHKEQQGQQSSSVSAVSPDPQ</sequence>
<evidence type="ECO:0000250" key="1">
    <source>
        <dbReference type="UniProtKB" id="Q8TBZ6"/>
    </source>
</evidence>
<evidence type="ECO:0000255" key="2"/>
<evidence type="ECO:0000255" key="3">
    <source>
        <dbReference type="PROSITE-ProRule" id="PRU01012"/>
    </source>
</evidence>
<evidence type="ECO:0000256" key="4">
    <source>
        <dbReference type="SAM" id="MobiDB-lite"/>
    </source>
</evidence>
<evidence type="ECO:0000269" key="5">
    <source>
    </source>
</evidence>
<evidence type="ECO:0007744" key="6">
    <source>
    </source>
</evidence>
<reference key="1">
    <citation type="journal article" date="2004" name="Genome Res.">
        <title>The status, quality, and expansion of the NIH full-length cDNA project: the Mammalian Gene Collection (MGC).</title>
        <authorList>
            <consortium name="The MGC Project Team"/>
        </authorList>
    </citation>
    <scope>NUCLEOTIDE SEQUENCE [LARGE SCALE MRNA]</scope>
    <source>
        <tissue>Thymus</tissue>
    </source>
</reference>
<reference key="2">
    <citation type="journal article" date="2012" name="Nat. Commun.">
        <title>Quantitative maps of protein phosphorylation sites across 14 different rat organs and tissues.</title>
        <authorList>
            <person name="Lundby A."/>
            <person name="Secher A."/>
            <person name="Lage K."/>
            <person name="Nordsborg N.B."/>
            <person name="Dmytriyev A."/>
            <person name="Lundby C."/>
            <person name="Olsen J.V."/>
        </authorList>
    </citation>
    <scope>PHOSPHORYLATION [LARGE SCALE ANALYSIS] AT SER-22; SER-24 AND SER-331</scope>
    <scope>IDENTIFICATION BY MASS SPECTROMETRY [LARGE SCALE ANALYSIS]</scope>
</reference>
<reference key="3">
    <citation type="journal article" date="2013" name="PLoS Genet.">
        <title>tRNA methyltransferase homolog gene TRMT10A mutation in young onset diabetes and primary microcephaly in humans.</title>
        <authorList>
            <person name="Igoillo-Esteve M."/>
            <person name="Genin A."/>
            <person name="Lambert N."/>
            <person name="Desir J."/>
            <person name="Pirson I."/>
            <person name="Abdulkarim B."/>
            <person name="Simonis N."/>
            <person name="Drielsma A."/>
            <person name="Marselli L."/>
            <person name="Marchetti P."/>
            <person name="Vanderhaeghen P."/>
            <person name="Eizirik D.L."/>
            <person name="Wuyts W."/>
            <person name="Julier C."/>
            <person name="Chakera A.J."/>
            <person name="Ellard S."/>
            <person name="Hattersley A.T."/>
            <person name="Abramowicz M."/>
            <person name="Cnop M."/>
        </authorList>
    </citation>
    <scope>TISSUE SPECIFICITY</scope>
</reference>
<keyword id="KW-0175">Coiled coil</keyword>
<keyword id="KW-0489">Methyltransferase</keyword>
<keyword id="KW-0539">Nucleus</keyword>
<keyword id="KW-0597">Phosphoprotein</keyword>
<keyword id="KW-1185">Reference proteome</keyword>
<keyword id="KW-0949">S-adenosyl-L-methionine</keyword>
<keyword id="KW-0808">Transferase</keyword>
<proteinExistence type="evidence at protein level"/>
<comment type="function">
    <text evidence="1">S-adenosyl-L-methionine-dependent guanine N(1)-methyltransferase that catalyzes the formation of N(1)-methylguanine at position 9 (m1G9) in tRNAs. Probably not able to catalyze formation of N(1)-methyladenine at position 9 (m1A9) in tRNAs.</text>
</comment>
<comment type="catalytic activity">
    <reaction evidence="1">
        <text>guanosine(9) in tRNA + S-adenosyl-L-methionine = N(1)-methylguanosine(9) in tRNA + S-adenosyl-L-homocysteine + H(+)</text>
        <dbReference type="Rhea" id="RHEA:43156"/>
        <dbReference type="Rhea" id="RHEA-COMP:10367"/>
        <dbReference type="Rhea" id="RHEA-COMP:10368"/>
        <dbReference type="ChEBI" id="CHEBI:15378"/>
        <dbReference type="ChEBI" id="CHEBI:57856"/>
        <dbReference type="ChEBI" id="CHEBI:59789"/>
        <dbReference type="ChEBI" id="CHEBI:73542"/>
        <dbReference type="ChEBI" id="CHEBI:74269"/>
        <dbReference type="EC" id="2.1.1.221"/>
    </reaction>
</comment>
<comment type="subunit">
    <text evidence="1">Interacts with tRNA.</text>
</comment>
<comment type="subcellular location">
    <subcellularLocation>
        <location evidence="1">Nucleus</location>
    </subcellularLocation>
    <subcellularLocation>
        <location evidence="1">Nucleus</location>
        <location evidence="1">Nucleolus</location>
    </subcellularLocation>
</comment>
<comment type="tissue specificity">
    <text evidence="5">Ubiquitously expressed. Is more abundant in brain and pancreatic islets compared to other tissues (at protein level).</text>
</comment>
<comment type="similarity">
    <text evidence="3">Belongs to the class IV-like SAM-binding methyltransferase superfamily. TRM10 family.</text>
</comment>
<dbReference type="EC" id="2.1.1.221" evidence="1"/>
<dbReference type="EMBL" id="BC099190">
    <property type="protein sequence ID" value="AAH99190.1"/>
    <property type="molecule type" value="mRNA"/>
</dbReference>
<dbReference type="RefSeq" id="NP_001037697.1">
    <property type="nucleotide sequence ID" value="NM_001044232.1"/>
</dbReference>
<dbReference type="RefSeq" id="XP_006233431.1">
    <property type="nucleotide sequence ID" value="XM_006233369.3"/>
</dbReference>
<dbReference type="RefSeq" id="XP_038958038.1">
    <property type="nucleotide sequence ID" value="XM_039102110.2"/>
</dbReference>
<dbReference type="SMR" id="Q4KLI2"/>
<dbReference type="FunCoup" id="Q4KLI2">
    <property type="interactions" value="2421"/>
</dbReference>
<dbReference type="STRING" id="10116.ENSRNOP00000071908"/>
<dbReference type="iPTMnet" id="Q4KLI2"/>
<dbReference type="PhosphoSitePlus" id="Q4KLI2"/>
<dbReference type="PaxDb" id="10116-ENSRNOP00000014694"/>
<dbReference type="GeneID" id="295496"/>
<dbReference type="KEGG" id="rno:295496"/>
<dbReference type="AGR" id="RGD:1594565"/>
<dbReference type="CTD" id="93587"/>
<dbReference type="RGD" id="1594565">
    <property type="gene designation" value="Trmt10a"/>
</dbReference>
<dbReference type="VEuPathDB" id="HostDB:ENSRNOG00000011025"/>
<dbReference type="eggNOG" id="KOG2967">
    <property type="taxonomic scope" value="Eukaryota"/>
</dbReference>
<dbReference type="HOGENOM" id="CLU_034384_7_0_1"/>
<dbReference type="InParanoid" id="Q4KLI2"/>
<dbReference type="OrthoDB" id="278300at2759"/>
<dbReference type="PhylomeDB" id="Q4KLI2"/>
<dbReference type="PRO" id="PR:Q4KLI2"/>
<dbReference type="Proteomes" id="UP000002494">
    <property type="component" value="Chromosome 2"/>
</dbReference>
<dbReference type="Bgee" id="ENSRNOG00000011025">
    <property type="expression patterns" value="Expressed in testis and 19 other cell types or tissues"/>
</dbReference>
<dbReference type="ExpressionAtlas" id="Q4KLI2">
    <property type="expression patterns" value="baseline and differential"/>
</dbReference>
<dbReference type="GO" id="GO:0005829">
    <property type="term" value="C:cytosol"/>
    <property type="evidence" value="ECO:0000318"/>
    <property type="project" value="GO_Central"/>
</dbReference>
<dbReference type="GO" id="GO:0005730">
    <property type="term" value="C:nucleolus"/>
    <property type="evidence" value="ECO:0000250"/>
    <property type="project" value="UniProtKB"/>
</dbReference>
<dbReference type="GO" id="GO:0005654">
    <property type="term" value="C:nucleoplasm"/>
    <property type="evidence" value="ECO:0000318"/>
    <property type="project" value="GO_Central"/>
</dbReference>
<dbReference type="GO" id="GO:0005634">
    <property type="term" value="C:nucleus"/>
    <property type="evidence" value="ECO:0000250"/>
    <property type="project" value="UniProtKB"/>
</dbReference>
<dbReference type="GO" id="GO:0052905">
    <property type="term" value="F:tRNA (guanosine(9)-N1)-methyltransferase activity"/>
    <property type="evidence" value="ECO:0000266"/>
    <property type="project" value="RGD"/>
</dbReference>
<dbReference type="GO" id="GO:0000049">
    <property type="term" value="F:tRNA binding"/>
    <property type="evidence" value="ECO:0000250"/>
    <property type="project" value="UniProtKB"/>
</dbReference>
<dbReference type="GO" id="GO:0010960">
    <property type="term" value="P:magnesium ion homeostasis"/>
    <property type="evidence" value="ECO:0000266"/>
    <property type="project" value="RGD"/>
</dbReference>
<dbReference type="GO" id="GO:0030488">
    <property type="term" value="P:tRNA methylation"/>
    <property type="evidence" value="ECO:0000250"/>
    <property type="project" value="UniProtKB"/>
</dbReference>
<dbReference type="GO" id="GO:0002939">
    <property type="term" value="P:tRNA N1-guanine methylation"/>
    <property type="evidence" value="ECO:0000266"/>
    <property type="project" value="RGD"/>
</dbReference>
<dbReference type="CDD" id="cd18101">
    <property type="entry name" value="Trm10euk_A"/>
    <property type="match status" value="1"/>
</dbReference>
<dbReference type="FunFam" id="3.40.1280.30:FF:000001">
    <property type="entry name" value="tRNA methyltransferase 10 homolog A"/>
    <property type="match status" value="1"/>
</dbReference>
<dbReference type="Gene3D" id="3.40.1280.30">
    <property type="match status" value="1"/>
</dbReference>
<dbReference type="InterPro" id="IPR028564">
    <property type="entry name" value="MT_TRM10-typ"/>
</dbReference>
<dbReference type="InterPro" id="IPR038459">
    <property type="entry name" value="MT_TRM10-typ_sf"/>
</dbReference>
<dbReference type="InterPro" id="IPR016653">
    <property type="entry name" value="TRM10/TRM10A"/>
</dbReference>
<dbReference type="InterPro" id="IPR007356">
    <property type="entry name" value="tRNA_m1G_MeTrfase_euk"/>
</dbReference>
<dbReference type="InterPro" id="IPR016009">
    <property type="entry name" value="tRNA_MeTrfase_TRMD/TRM10"/>
</dbReference>
<dbReference type="PANTHER" id="PTHR13563">
    <property type="entry name" value="TRNA (GUANINE-9-) METHYLTRANSFERASE"/>
    <property type="match status" value="1"/>
</dbReference>
<dbReference type="PANTHER" id="PTHR13563:SF13">
    <property type="entry name" value="TRNA METHYLTRANSFERASE 10 HOMOLOG A"/>
    <property type="match status" value="1"/>
</dbReference>
<dbReference type="Pfam" id="PF01746">
    <property type="entry name" value="tRNA_m1G_MT"/>
    <property type="match status" value="1"/>
</dbReference>
<dbReference type="PIRSF" id="PIRSF016323">
    <property type="entry name" value="tRNA_m1G_mtfrase_met"/>
    <property type="match status" value="1"/>
</dbReference>
<dbReference type="PROSITE" id="PS51675">
    <property type="entry name" value="SAM_MT_TRM10"/>
    <property type="match status" value="1"/>
</dbReference>
<name>TM10A_RAT</name>
<gene>
    <name type="primary">Trmt10a</name>
    <name type="synonym">Rg9mtd2</name>
</gene>
<protein>
    <recommendedName>
        <fullName>tRNA methyltransferase 10 homolog A</fullName>
        <ecNumber evidence="1">2.1.1.221</ecNumber>
    </recommendedName>
    <alternativeName>
        <fullName>RNA (guanine-9-)-methyltransferase domain-containing protein 2</fullName>
    </alternativeName>
    <alternativeName>
        <fullName>tRNA (guanine(9)-N(1))-methyltransferase TRMT10A</fullName>
    </alternativeName>
</protein>
<organism>
    <name type="scientific">Rattus norvegicus</name>
    <name type="common">Rat</name>
    <dbReference type="NCBI Taxonomy" id="10116"/>
    <lineage>
        <taxon>Eukaryota</taxon>
        <taxon>Metazoa</taxon>
        <taxon>Chordata</taxon>
        <taxon>Craniata</taxon>
        <taxon>Vertebrata</taxon>
        <taxon>Euteleostomi</taxon>
        <taxon>Mammalia</taxon>
        <taxon>Eutheria</taxon>
        <taxon>Euarchontoglires</taxon>
        <taxon>Glires</taxon>
        <taxon>Rodentia</taxon>
        <taxon>Myomorpha</taxon>
        <taxon>Muroidea</taxon>
        <taxon>Muridae</taxon>
        <taxon>Murinae</taxon>
        <taxon>Rattus</taxon>
    </lineage>
</organism>
<feature type="chain" id="PRO_0000311317" description="tRNA methyltransferase 10 homolog A">
    <location>
        <begin position="1"/>
        <end position="335"/>
    </location>
</feature>
<feature type="domain" description="SAM-dependent MTase TRM10-type" evidence="3">
    <location>
        <begin position="88"/>
        <end position="279"/>
    </location>
</feature>
<feature type="region of interest" description="Disordered" evidence="4">
    <location>
        <begin position="1"/>
        <end position="91"/>
    </location>
</feature>
<feature type="region of interest" description="Disordered" evidence="4">
    <location>
        <begin position="279"/>
        <end position="335"/>
    </location>
</feature>
<feature type="coiled-coil region" evidence="2">
    <location>
        <begin position="52"/>
        <end position="84"/>
    </location>
</feature>
<feature type="compositionally biased region" description="Basic and acidic residues" evidence="4">
    <location>
        <begin position="52"/>
        <end position="62"/>
    </location>
</feature>
<feature type="compositionally biased region" description="Basic residues" evidence="4">
    <location>
        <begin position="63"/>
        <end position="75"/>
    </location>
</feature>
<feature type="compositionally biased region" description="Basic and acidic residues" evidence="4">
    <location>
        <begin position="304"/>
        <end position="319"/>
    </location>
</feature>
<feature type="compositionally biased region" description="Low complexity" evidence="4">
    <location>
        <begin position="320"/>
        <end position="335"/>
    </location>
</feature>
<feature type="modified residue" description="Phosphoserine" evidence="6">
    <location>
        <position position="22"/>
    </location>
</feature>
<feature type="modified residue" description="Phosphoserine" evidence="6">
    <location>
        <position position="24"/>
    </location>
</feature>
<feature type="modified residue" description="Phosphoserine" evidence="6">
    <location>
        <position position="331"/>
    </location>
</feature>
<accession>Q4KLI2</accession>